<sequence>MDDEEVAESWEEAADSGEMERRLEEKLRISQKERLSSGSSSRSPMRTAIVIQDDSLPAAPPPQIRILKRPSSNGSLGSSALQTRPSPQVKSLAQREAEYAEARKRILGSATPDDTPQERPNSDRSPRGSSHTLSEENRPGNHVVRQPAGPDGTQGFHHQRR</sequence>
<organism>
    <name type="scientific">Danio rerio</name>
    <name type="common">Zebrafish</name>
    <name type="synonym">Brachydanio rerio</name>
    <dbReference type="NCBI Taxonomy" id="7955"/>
    <lineage>
        <taxon>Eukaryota</taxon>
        <taxon>Metazoa</taxon>
        <taxon>Chordata</taxon>
        <taxon>Craniata</taxon>
        <taxon>Vertebrata</taxon>
        <taxon>Euteleostomi</taxon>
        <taxon>Actinopterygii</taxon>
        <taxon>Neopterygii</taxon>
        <taxon>Teleostei</taxon>
        <taxon>Ostariophysi</taxon>
        <taxon>Cypriniformes</taxon>
        <taxon>Danionidae</taxon>
        <taxon>Danioninae</taxon>
        <taxon>Danio</taxon>
    </lineage>
</organism>
<keyword id="KW-0597">Phosphoprotein</keyword>
<keyword id="KW-1185">Reference proteome</keyword>
<evidence type="ECO:0000255" key="1">
    <source>
        <dbReference type="PROSITE-ProRule" id="PRU01009"/>
    </source>
</evidence>
<evidence type="ECO:0000255" key="2">
    <source>
        <dbReference type="PROSITE-ProRule" id="PRU01287"/>
    </source>
</evidence>
<evidence type="ECO:0000256" key="3">
    <source>
        <dbReference type="SAM" id="MobiDB-lite"/>
    </source>
</evidence>
<evidence type="ECO:0000269" key="4">
    <source>
    </source>
</evidence>
<evidence type="ECO:0000305" key="5"/>
<accession>Q504E7</accession>
<comment type="similarity">
    <text evidence="5">Belongs to the SZRD1 family.</text>
</comment>
<dbReference type="EMBL" id="BC095055">
    <property type="protein sequence ID" value="AAH95055.1"/>
    <property type="molecule type" value="mRNA"/>
</dbReference>
<dbReference type="RefSeq" id="NP_001025247.1">
    <property type="nucleotide sequence ID" value="NM_001030076.2"/>
</dbReference>
<dbReference type="SMR" id="Q504E7"/>
<dbReference type="FunCoup" id="Q504E7">
    <property type="interactions" value="349"/>
</dbReference>
<dbReference type="STRING" id="7955.ENSDARP00000073284"/>
<dbReference type="iPTMnet" id="Q504E7"/>
<dbReference type="PaxDb" id="7955-ENSDARP00000073284"/>
<dbReference type="Ensembl" id="ENSDART00000078824">
    <property type="protein sequence ID" value="ENSDARP00000073284"/>
    <property type="gene ID" value="ENSDARG00000056338"/>
</dbReference>
<dbReference type="Ensembl" id="ENSDART00000186768">
    <property type="protein sequence ID" value="ENSDARP00000151572"/>
    <property type="gene ID" value="ENSDARG00000114005"/>
</dbReference>
<dbReference type="GeneID" id="554231"/>
<dbReference type="KEGG" id="dre:554231"/>
<dbReference type="AGR" id="ZFIN:ZDB-GENE-050522-55"/>
<dbReference type="CTD" id="26099"/>
<dbReference type="ZFIN" id="ZDB-GENE-050522-55">
    <property type="gene designation" value="szrd1"/>
</dbReference>
<dbReference type="eggNOG" id="ENOG502RZH5">
    <property type="taxonomic scope" value="Eukaryota"/>
</dbReference>
<dbReference type="HOGENOM" id="CLU_120658_0_0_1"/>
<dbReference type="InParanoid" id="Q504E7"/>
<dbReference type="OMA" id="VADDVCD"/>
<dbReference type="OrthoDB" id="5373615at2759"/>
<dbReference type="PhylomeDB" id="Q504E7"/>
<dbReference type="TreeFam" id="TF324643"/>
<dbReference type="PRO" id="PR:Q504E7"/>
<dbReference type="Proteomes" id="UP000000437">
    <property type="component" value="Alternate scaffold 23"/>
</dbReference>
<dbReference type="Proteomes" id="UP000000437">
    <property type="component" value="Chromosome 23"/>
</dbReference>
<dbReference type="Bgee" id="ENSDARG00000056338">
    <property type="expression patterns" value="Expressed in somite and 26 other cell types or tissues"/>
</dbReference>
<dbReference type="ExpressionAtlas" id="Q504E7">
    <property type="expression patterns" value="baseline"/>
</dbReference>
<dbReference type="InterPro" id="IPR024771">
    <property type="entry name" value="SUZ"/>
</dbReference>
<dbReference type="InterPro" id="IPR024642">
    <property type="entry name" value="SUZ-C"/>
</dbReference>
<dbReference type="InterPro" id="IPR039228">
    <property type="entry name" value="SZRD1"/>
</dbReference>
<dbReference type="PANTHER" id="PTHR31796">
    <property type="entry name" value="SUZ DOMAIN-CONTAINING PROTEIN 1"/>
    <property type="match status" value="1"/>
</dbReference>
<dbReference type="PANTHER" id="PTHR31796:SF2">
    <property type="entry name" value="SUZ DOMAIN-CONTAINING PROTEIN 1"/>
    <property type="match status" value="1"/>
</dbReference>
<dbReference type="Pfam" id="PF12752">
    <property type="entry name" value="SUZ"/>
    <property type="match status" value="1"/>
</dbReference>
<dbReference type="Pfam" id="PF12901">
    <property type="entry name" value="SUZ-C"/>
    <property type="match status" value="1"/>
</dbReference>
<dbReference type="PROSITE" id="PS51673">
    <property type="entry name" value="SUZ"/>
    <property type="match status" value="1"/>
</dbReference>
<dbReference type="PROSITE" id="PS51938">
    <property type="entry name" value="SUZ_C"/>
    <property type="match status" value="1"/>
</dbReference>
<reference key="1">
    <citation type="submission" date="2005-05" db="EMBL/GenBank/DDBJ databases">
        <authorList>
            <consortium name="NIH - Zebrafish Gene Collection (ZGC) project"/>
        </authorList>
    </citation>
    <scope>NUCLEOTIDE SEQUENCE [LARGE SCALE MRNA]</scope>
    <source>
        <tissue>Ovary</tissue>
    </source>
</reference>
<reference key="2">
    <citation type="journal article" date="2008" name="J. Proteome Res.">
        <title>Online automated in vivo zebrafish phosphoproteomics: from large-scale analysis down to a single embryo.</title>
        <authorList>
            <person name="Lemeer S."/>
            <person name="Pinkse M.W.H."/>
            <person name="Mohammed S."/>
            <person name="van Breukelen B."/>
            <person name="den Hertog J."/>
            <person name="Slijper M."/>
            <person name="Heck A.J.R."/>
        </authorList>
    </citation>
    <scope>PHOSPHORYLATION [LARGE SCALE ANALYSIS] AT SER-125</scope>
    <scope>IDENTIFICATION BY MASS SPECTROMETRY</scope>
    <source>
        <tissue>Embryo</tissue>
    </source>
</reference>
<gene>
    <name type="primary">szrd1</name>
    <name type="ORF">zgc:109926</name>
</gene>
<protein>
    <recommendedName>
        <fullName>SUZ RNA-binding domain-containing</fullName>
        <shortName>SUZ domain-containing protein 1</shortName>
    </recommendedName>
</protein>
<name>SZRD1_DANRE</name>
<proteinExistence type="evidence at protein level"/>
<feature type="chain" id="PRO_0000303073" description="SUZ RNA-binding domain-containing">
    <location>
        <begin position="1"/>
        <end position="161"/>
    </location>
</feature>
<feature type="domain" description="SUZ" evidence="1">
    <location>
        <begin position="42"/>
        <end position="111"/>
    </location>
</feature>
<feature type="domain" description="SUZ-C" evidence="2">
    <location>
        <begin position="116"/>
        <end position="160"/>
    </location>
</feature>
<feature type="region of interest" description="Disordered" evidence="3">
    <location>
        <begin position="1"/>
        <end position="161"/>
    </location>
</feature>
<feature type="compositionally biased region" description="Acidic residues" evidence="3">
    <location>
        <begin position="1"/>
        <end position="17"/>
    </location>
</feature>
<feature type="compositionally biased region" description="Basic and acidic residues" evidence="3">
    <location>
        <begin position="18"/>
        <end position="35"/>
    </location>
</feature>
<feature type="compositionally biased region" description="Polar residues" evidence="3">
    <location>
        <begin position="70"/>
        <end position="91"/>
    </location>
</feature>
<feature type="compositionally biased region" description="Basic and acidic residues" evidence="3">
    <location>
        <begin position="93"/>
        <end position="104"/>
    </location>
</feature>
<feature type="compositionally biased region" description="Basic and acidic residues" evidence="3">
    <location>
        <begin position="116"/>
        <end position="126"/>
    </location>
</feature>
<feature type="modified residue" description="Phosphoserine" evidence="4">
    <location>
        <position position="125"/>
    </location>
</feature>